<reference key="1">
    <citation type="journal article" date="2011" name="J. Bacteriol.">
        <title>Comparative genomics of 28 Salmonella enterica isolates: evidence for CRISPR-mediated adaptive sublineage evolution.</title>
        <authorList>
            <person name="Fricke W.F."/>
            <person name="Mammel M.K."/>
            <person name="McDermott P.F."/>
            <person name="Tartera C."/>
            <person name="White D.G."/>
            <person name="Leclerc J.E."/>
            <person name="Ravel J."/>
            <person name="Cebula T.A."/>
        </authorList>
    </citation>
    <scope>NUCLEOTIDE SEQUENCE [LARGE SCALE GENOMIC DNA]</scope>
    <source>
        <strain>CVM19633</strain>
    </source>
</reference>
<dbReference type="EC" id="3.5.99.6" evidence="1"/>
<dbReference type="EMBL" id="CP001127">
    <property type="protein sequence ID" value="ACF90579.1"/>
    <property type="molecule type" value="Genomic_DNA"/>
</dbReference>
<dbReference type="RefSeq" id="WP_001237059.1">
    <property type="nucleotide sequence ID" value="NC_011094.1"/>
</dbReference>
<dbReference type="SMR" id="B4TPZ8"/>
<dbReference type="KEGG" id="sew:SeSA_A0839"/>
<dbReference type="HOGENOM" id="CLU_049611_0_1_6"/>
<dbReference type="UniPathway" id="UPA00629">
    <property type="reaction ID" value="UER00684"/>
</dbReference>
<dbReference type="Proteomes" id="UP000001865">
    <property type="component" value="Chromosome"/>
</dbReference>
<dbReference type="GO" id="GO:0005737">
    <property type="term" value="C:cytoplasm"/>
    <property type="evidence" value="ECO:0007669"/>
    <property type="project" value="TreeGrafter"/>
</dbReference>
<dbReference type="GO" id="GO:0004342">
    <property type="term" value="F:glucosamine-6-phosphate deaminase activity"/>
    <property type="evidence" value="ECO:0007669"/>
    <property type="project" value="UniProtKB-UniRule"/>
</dbReference>
<dbReference type="GO" id="GO:0042802">
    <property type="term" value="F:identical protein binding"/>
    <property type="evidence" value="ECO:0007669"/>
    <property type="project" value="TreeGrafter"/>
</dbReference>
<dbReference type="GO" id="GO:0005975">
    <property type="term" value="P:carbohydrate metabolic process"/>
    <property type="evidence" value="ECO:0007669"/>
    <property type="project" value="InterPro"/>
</dbReference>
<dbReference type="GO" id="GO:0006043">
    <property type="term" value="P:glucosamine catabolic process"/>
    <property type="evidence" value="ECO:0007669"/>
    <property type="project" value="TreeGrafter"/>
</dbReference>
<dbReference type="GO" id="GO:0006046">
    <property type="term" value="P:N-acetylglucosamine catabolic process"/>
    <property type="evidence" value="ECO:0007669"/>
    <property type="project" value="TreeGrafter"/>
</dbReference>
<dbReference type="GO" id="GO:0019262">
    <property type="term" value="P:N-acetylneuraminate catabolic process"/>
    <property type="evidence" value="ECO:0007669"/>
    <property type="project" value="UniProtKB-UniRule"/>
</dbReference>
<dbReference type="CDD" id="cd01399">
    <property type="entry name" value="GlcN6P_deaminase"/>
    <property type="match status" value="1"/>
</dbReference>
<dbReference type="FunFam" id="3.40.50.1360:FF:000002">
    <property type="entry name" value="Glucosamine-6-phosphate deaminase"/>
    <property type="match status" value="1"/>
</dbReference>
<dbReference type="Gene3D" id="3.40.50.1360">
    <property type="match status" value="1"/>
</dbReference>
<dbReference type="HAMAP" id="MF_01241">
    <property type="entry name" value="GlcN6P_deamin"/>
    <property type="match status" value="1"/>
</dbReference>
<dbReference type="InterPro" id="IPR006148">
    <property type="entry name" value="Glc/Gal-6P_isomerase"/>
</dbReference>
<dbReference type="InterPro" id="IPR004547">
    <property type="entry name" value="Glucosamine6P_isomerase"/>
</dbReference>
<dbReference type="InterPro" id="IPR018321">
    <property type="entry name" value="Glucosamine6P_isomerase_CS"/>
</dbReference>
<dbReference type="InterPro" id="IPR037171">
    <property type="entry name" value="NagB/RpiA_transferase-like"/>
</dbReference>
<dbReference type="NCBIfam" id="TIGR00502">
    <property type="entry name" value="nagB"/>
    <property type="match status" value="1"/>
</dbReference>
<dbReference type="NCBIfam" id="NF001685">
    <property type="entry name" value="PRK00443.1-5"/>
    <property type="match status" value="1"/>
</dbReference>
<dbReference type="PANTHER" id="PTHR11280">
    <property type="entry name" value="GLUCOSAMINE-6-PHOSPHATE ISOMERASE"/>
    <property type="match status" value="1"/>
</dbReference>
<dbReference type="PANTHER" id="PTHR11280:SF5">
    <property type="entry name" value="GLUCOSAMINE-6-PHOSPHATE ISOMERASE"/>
    <property type="match status" value="1"/>
</dbReference>
<dbReference type="Pfam" id="PF01182">
    <property type="entry name" value="Glucosamine_iso"/>
    <property type="match status" value="1"/>
</dbReference>
<dbReference type="SUPFAM" id="SSF100950">
    <property type="entry name" value="NagB/RpiA/CoA transferase-like"/>
    <property type="match status" value="1"/>
</dbReference>
<dbReference type="PROSITE" id="PS01161">
    <property type="entry name" value="GLC_GALNAC_ISOMERASE"/>
    <property type="match status" value="1"/>
</dbReference>
<protein>
    <recommendedName>
        <fullName evidence="1">Glucosamine-6-phosphate deaminase</fullName>
        <ecNumber evidence="1">3.5.99.6</ecNumber>
    </recommendedName>
    <alternativeName>
        <fullName evidence="1">GlcN6P deaminase</fullName>
        <shortName evidence="1">GNPDA</shortName>
    </alternativeName>
    <alternativeName>
        <fullName evidence="1">Glucosamine-6-phosphate isomerase</fullName>
    </alternativeName>
</protein>
<gene>
    <name evidence="1" type="primary">nagB</name>
    <name type="ordered locus">SeSA_A0839</name>
</gene>
<keyword id="KW-0021">Allosteric enzyme</keyword>
<keyword id="KW-0119">Carbohydrate metabolism</keyword>
<keyword id="KW-0378">Hydrolase</keyword>
<proteinExistence type="inferred from homology"/>
<sequence length="266" mass="29632">MRLIPLSTAEQVGKWAARHIVNRINAFKPTADRPFVLGLPTGGTPLTAYKALVEMHKAGEVSFKHVVTFNMDEYVGLPKEHPESYHSFMHRNFFDHVDIPAENINLLNGNAPDIDAECRQYEEKIRSYGKIHLFMGGVGNDGHIAFNEPASSLASRTRIKTLTHDTRVANSRFFDGDVNQVPKYALTVGVGTLLDAEEVMILVLGHQKAQALQAAVEGNVNHMWTISCLQLHPKAVVVCDEPSTMELKVKTLKYFNELEAENIKGL</sequence>
<name>NAGB_SALSV</name>
<organism>
    <name type="scientific">Salmonella schwarzengrund (strain CVM19633)</name>
    <dbReference type="NCBI Taxonomy" id="439843"/>
    <lineage>
        <taxon>Bacteria</taxon>
        <taxon>Pseudomonadati</taxon>
        <taxon>Pseudomonadota</taxon>
        <taxon>Gammaproteobacteria</taxon>
        <taxon>Enterobacterales</taxon>
        <taxon>Enterobacteriaceae</taxon>
        <taxon>Salmonella</taxon>
    </lineage>
</organism>
<comment type="function">
    <text evidence="1">Catalyzes the reversible isomerization-deamination of glucosamine 6-phosphate (GlcN6P) to form fructose 6-phosphate (Fru6P) and ammonium ion.</text>
</comment>
<comment type="catalytic activity">
    <reaction evidence="1">
        <text>alpha-D-glucosamine 6-phosphate + H2O = beta-D-fructose 6-phosphate + NH4(+)</text>
        <dbReference type="Rhea" id="RHEA:12172"/>
        <dbReference type="ChEBI" id="CHEBI:15377"/>
        <dbReference type="ChEBI" id="CHEBI:28938"/>
        <dbReference type="ChEBI" id="CHEBI:57634"/>
        <dbReference type="ChEBI" id="CHEBI:75989"/>
        <dbReference type="EC" id="3.5.99.6"/>
    </reaction>
</comment>
<comment type="activity regulation">
    <text evidence="1">Allosterically activated by N-acetylglucosamine 6-phosphate (GlcNAc6P).</text>
</comment>
<comment type="pathway">
    <text evidence="1">Amino-sugar metabolism; N-acetylneuraminate degradation; D-fructose 6-phosphate from N-acetylneuraminate: step 5/5.</text>
</comment>
<comment type="subunit">
    <text evidence="1">Homohexamer.</text>
</comment>
<comment type="similarity">
    <text evidence="1">Belongs to the glucosamine/galactosamine-6-phosphate isomerase family. NagB subfamily.</text>
</comment>
<feature type="chain" id="PRO_1000139791" description="Glucosamine-6-phosphate deaminase">
    <location>
        <begin position="1"/>
        <end position="266"/>
    </location>
</feature>
<feature type="active site" description="Proton acceptor; for enolization step" evidence="1">
    <location>
        <position position="72"/>
    </location>
</feature>
<feature type="active site" description="For ring-opening step" evidence="1">
    <location>
        <position position="141"/>
    </location>
</feature>
<feature type="active site" description="Proton acceptor; for ring-opening step" evidence="1">
    <location>
        <position position="143"/>
    </location>
</feature>
<feature type="active site" description="For ring-opening step" evidence="1">
    <location>
        <position position="148"/>
    </location>
</feature>
<feature type="site" description="Part of the allosteric site" evidence="1">
    <location>
        <position position="151"/>
    </location>
</feature>
<feature type="site" description="Part of the allosteric site" evidence="1">
    <location>
        <position position="158"/>
    </location>
</feature>
<feature type="site" description="Part of the allosteric site" evidence="1">
    <location>
        <position position="160"/>
    </location>
</feature>
<feature type="site" description="Part of the allosteric site" evidence="1">
    <location>
        <position position="161"/>
    </location>
</feature>
<feature type="site" description="Part of the allosteric site" evidence="1">
    <location>
        <position position="254"/>
    </location>
</feature>
<accession>B4TPZ8</accession>
<evidence type="ECO:0000255" key="1">
    <source>
        <dbReference type="HAMAP-Rule" id="MF_01241"/>
    </source>
</evidence>